<keyword id="KW-0963">Cytoplasm</keyword>
<keyword id="KW-0378">Hydrolase</keyword>
<keyword id="KW-0540">Nuclease</keyword>
<keyword id="KW-0690">Ribosome biogenesis</keyword>
<protein>
    <recommendedName>
        <fullName evidence="1">Putative pre-16S rRNA nuclease</fullName>
        <ecNumber evidence="1">3.1.-.-</ecNumber>
    </recommendedName>
</protein>
<gene>
    <name type="ordered locus">lhv_0440</name>
</gene>
<name>YQGF_LACH4</name>
<dbReference type="EC" id="3.1.-.-" evidence="1"/>
<dbReference type="EMBL" id="CP000517">
    <property type="protein sequence ID" value="ABX26648.1"/>
    <property type="molecule type" value="Genomic_DNA"/>
</dbReference>
<dbReference type="SMR" id="A8YTJ2"/>
<dbReference type="KEGG" id="lhe:lhv_0440"/>
<dbReference type="eggNOG" id="COG0816">
    <property type="taxonomic scope" value="Bacteria"/>
</dbReference>
<dbReference type="HOGENOM" id="CLU_098240_2_0_9"/>
<dbReference type="Proteomes" id="UP000000790">
    <property type="component" value="Chromosome"/>
</dbReference>
<dbReference type="GO" id="GO:0005829">
    <property type="term" value="C:cytosol"/>
    <property type="evidence" value="ECO:0007669"/>
    <property type="project" value="TreeGrafter"/>
</dbReference>
<dbReference type="GO" id="GO:0004518">
    <property type="term" value="F:nuclease activity"/>
    <property type="evidence" value="ECO:0007669"/>
    <property type="project" value="UniProtKB-KW"/>
</dbReference>
<dbReference type="GO" id="GO:0000967">
    <property type="term" value="P:rRNA 5'-end processing"/>
    <property type="evidence" value="ECO:0007669"/>
    <property type="project" value="UniProtKB-UniRule"/>
</dbReference>
<dbReference type="CDD" id="cd16964">
    <property type="entry name" value="YqgF"/>
    <property type="match status" value="1"/>
</dbReference>
<dbReference type="Gene3D" id="3.30.420.140">
    <property type="entry name" value="YqgF/RNase H-like domain"/>
    <property type="match status" value="1"/>
</dbReference>
<dbReference type="HAMAP" id="MF_00651">
    <property type="entry name" value="Nuclease_YqgF"/>
    <property type="match status" value="1"/>
</dbReference>
<dbReference type="InterPro" id="IPR012337">
    <property type="entry name" value="RNaseH-like_sf"/>
</dbReference>
<dbReference type="InterPro" id="IPR005227">
    <property type="entry name" value="YqgF"/>
</dbReference>
<dbReference type="InterPro" id="IPR006641">
    <property type="entry name" value="YqgF/RNaseH-like_dom"/>
</dbReference>
<dbReference type="InterPro" id="IPR037027">
    <property type="entry name" value="YqgF/RNaseH-like_dom_sf"/>
</dbReference>
<dbReference type="NCBIfam" id="TIGR00250">
    <property type="entry name" value="RNAse_H_YqgF"/>
    <property type="match status" value="1"/>
</dbReference>
<dbReference type="PANTHER" id="PTHR33317">
    <property type="entry name" value="POLYNUCLEOTIDYL TRANSFERASE, RIBONUCLEASE H-LIKE SUPERFAMILY PROTEIN"/>
    <property type="match status" value="1"/>
</dbReference>
<dbReference type="PANTHER" id="PTHR33317:SF4">
    <property type="entry name" value="POLYNUCLEOTIDYL TRANSFERASE, RIBONUCLEASE H-LIKE SUPERFAMILY PROTEIN"/>
    <property type="match status" value="1"/>
</dbReference>
<dbReference type="Pfam" id="PF03652">
    <property type="entry name" value="RuvX"/>
    <property type="match status" value="1"/>
</dbReference>
<dbReference type="SMART" id="SM00732">
    <property type="entry name" value="YqgFc"/>
    <property type="match status" value="1"/>
</dbReference>
<dbReference type="SUPFAM" id="SSF53098">
    <property type="entry name" value="Ribonuclease H-like"/>
    <property type="match status" value="1"/>
</dbReference>
<feature type="chain" id="PRO_1000072690" description="Putative pre-16S rRNA nuclease">
    <location>
        <begin position="1"/>
        <end position="142"/>
    </location>
</feature>
<comment type="function">
    <text evidence="1">Could be a nuclease involved in processing of the 5'-end of pre-16S rRNA.</text>
</comment>
<comment type="subcellular location">
    <subcellularLocation>
        <location evidence="1">Cytoplasm</location>
    </subcellularLocation>
</comment>
<comment type="similarity">
    <text evidence="1">Belongs to the YqgF nuclease family.</text>
</comment>
<proteinExistence type="inferred from homology"/>
<organism>
    <name type="scientific">Lactobacillus helveticus (strain DPC 4571)</name>
    <dbReference type="NCBI Taxonomy" id="405566"/>
    <lineage>
        <taxon>Bacteria</taxon>
        <taxon>Bacillati</taxon>
        <taxon>Bacillota</taxon>
        <taxon>Bacilli</taxon>
        <taxon>Lactobacillales</taxon>
        <taxon>Lactobacillaceae</taxon>
        <taxon>Lactobacillus</taxon>
    </lineage>
</organism>
<sequence>MRLLGLDIGSKTVGVSVSDELGITAQKLETIKIDETKYNFGMRPLKKLVRQYEVDGFVLGLPKNMDGTSGASVARSKAYGKRLEEKFGLPVHYSDERLTTIESRRVLVEDAGIHDRKKRKQVIDQMAAVLILQNYLDLHRKD</sequence>
<accession>A8YTJ2</accession>
<evidence type="ECO:0000255" key="1">
    <source>
        <dbReference type="HAMAP-Rule" id="MF_00651"/>
    </source>
</evidence>
<reference key="1">
    <citation type="journal article" date="2008" name="J. Bacteriol.">
        <title>Genome sequence of Lactobacillus helveticus: an organism distinguished by selective gene loss and IS element expansion.</title>
        <authorList>
            <person name="Callanan M."/>
            <person name="Kaleta P."/>
            <person name="O'Callaghan J."/>
            <person name="O'Sullivan O."/>
            <person name="Jordan K."/>
            <person name="McAuliffe O."/>
            <person name="Sangrador-Vegas A."/>
            <person name="Slattery L."/>
            <person name="Fitzgerald G.F."/>
            <person name="Beresford T."/>
            <person name="Ross R.P."/>
        </authorList>
    </citation>
    <scope>NUCLEOTIDE SEQUENCE [LARGE SCALE GENOMIC DNA]</scope>
    <source>
        <strain>DPC 4571</strain>
    </source>
</reference>